<keyword id="KW-0153">Cholesterol metabolism</keyword>
<keyword id="KW-0256">Endoplasmic reticulum</keyword>
<keyword id="KW-0443">Lipid metabolism</keyword>
<keyword id="KW-0446">Lipid-binding</keyword>
<keyword id="KW-0472">Membrane</keyword>
<keyword id="KW-1185">Reference proteome</keyword>
<keyword id="KW-0753">Steroid metabolism</keyword>
<keyword id="KW-1207">Sterol metabolism</keyword>
<keyword id="KW-0812">Transmembrane</keyword>
<keyword id="KW-1133">Transmembrane helix</keyword>
<proteinExistence type="evidence at transcript level"/>
<feature type="chain" id="PRO_0000287390" description="Insulin-induced gene 1 protein">
    <location>
        <begin position="1"/>
        <end position="251"/>
    </location>
</feature>
<feature type="topological domain" description="Cytoplasmic" evidence="2">
    <location>
        <begin position="1"/>
        <end position="58"/>
    </location>
</feature>
<feature type="transmembrane region" description="Helical; Name=1" evidence="1">
    <location>
        <begin position="59"/>
        <end position="81"/>
    </location>
</feature>
<feature type="topological domain" description="Extracellular" evidence="4">
    <location>
        <begin position="82"/>
        <end position="100"/>
    </location>
</feature>
<feature type="transmembrane region" description="Helical; Name=2" evidence="1">
    <location>
        <begin position="101"/>
        <end position="118"/>
    </location>
</feature>
<feature type="topological domain" description="Cytoplasmic" evidence="4">
    <location>
        <begin position="119"/>
        <end position="133"/>
    </location>
</feature>
<feature type="transmembrane region" description="Helical; Name=3" evidence="1">
    <location>
        <begin position="134"/>
        <end position="156"/>
    </location>
</feature>
<feature type="topological domain" description="Extracellular" evidence="4">
    <location>
        <begin position="157"/>
        <end position="159"/>
    </location>
</feature>
<feature type="transmembrane region" description="Helical; Name=4" evidence="1">
    <location>
        <begin position="160"/>
        <end position="178"/>
    </location>
</feature>
<feature type="topological domain" description="Cytoplasmic" evidence="2">
    <location>
        <begin position="179"/>
        <end position="183"/>
    </location>
</feature>
<feature type="transmembrane region" description="Helical; Name=5" evidence="1">
    <location>
        <begin position="184"/>
        <end position="205"/>
    </location>
</feature>
<feature type="topological domain" description="Extracellular" evidence="4">
    <location>
        <begin position="206"/>
        <end position="219"/>
    </location>
</feature>
<feature type="transmembrane region" description="Helical; Name=6" evidence="1">
    <location>
        <begin position="220"/>
        <end position="237"/>
    </location>
</feature>
<feature type="topological domain" description="Cytoplasmic" evidence="2">
    <location>
        <begin position="238"/>
        <end position="251"/>
    </location>
</feature>
<feature type="short sequence motif" description="KxHxx" evidence="2">
    <location>
        <begin position="245"/>
        <end position="251"/>
    </location>
</feature>
<feature type="site" description="Required for the recognition of 25-hydroxycholesterol" evidence="3">
    <location>
        <position position="145"/>
    </location>
</feature>
<gene>
    <name evidence="2" type="primary">insig1</name>
</gene>
<dbReference type="EMBL" id="BC076862">
    <property type="protein sequence ID" value="AAH76862.1"/>
    <property type="molecule type" value="mRNA"/>
</dbReference>
<dbReference type="RefSeq" id="NP_001086601.1">
    <property type="nucleotide sequence ID" value="NM_001093132.1"/>
</dbReference>
<dbReference type="SMR" id="Q6DF80"/>
<dbReference type="DNASU" id="446436"/>
<dbReference type="GeneID" id="446436"/>
<dbReference type="KEGG" id="xla:446436"/>
<dbReference type="AGR" id="Xenbase:XB-GENE-6077599"/>
<dbReference type="CTD" id="446436"/>
<dbReference type="Xenbase" id="XB-GENE-6077599">
    <property type="gene designation" value="insig1.L"/>
</dbReference>
<dbReference type="OMA" id="ENHTWSC"/>
<dbReference type="OrthoDB" id="205546at2759"/>
<dbReference type="Proteomes" id="UP000186698">
    <property type="component" value="Chromosome 6L"/>
</dbReference>
<dbReference type="Bgee" id="446436">
    <property type="expression patterns" value="Expressed in kidney and 19 other cell types or tissues"/>
</dbReference>
<dbReference type="GO" id="GO:0005783">
    <property type="term" value="C:endoplasmic reticulum"/>
    <property type="evidence" value="ECO:0000318"/>
    <property type="project" value="GO_Central"/>
</dbReference>
<dbReference type="GO" id="GO:0032937">
    <property type="term" value="C:SREBP-SCAP-Insig complex"/>
    <property type="evidence" value="ECO:0000318"/>
    <property type="project" value="GO_Central"/>
</dbReference>
<dbReference type="GO" id="GO:0008142">
    <property type="term" value="F:oxysterol binding"/>
    <property type="evidence" value="ECO:0000250"/>
    <property type="project" value="UniProtKB"/>
</dbReference>
<dbReference type="GO" id="GO:0032869">
    <property type="term" value="P:cellular response to insulin stimulus"/>
    <property type="evidence" value="ECO:0000318"/>
    <property type="project" value="GO_Central"/>
</dbReference>
<dbReference type="GO" id="GO:0006695">
    <property type="term" value="P:cholesterol biosynthetic process"/>
    <property type="evidence" value="ECO:0000318"/>
    <property type="project" value="GO_Central"/>
</dbReference>
<dbReference type="GO" id="GO:0032933">
    <property type="term" value="P:SREBP signaling pathway"/>
    <property type="evidence" value="ECO:0000318"/>
    <property type="project" value="GO_Central"/>
</dbReference>
<dbReference type="GO" id="GO:0036316">
    <property type="term" value="P:SREBP-SCAP complex retention in endoplasmic reticulum"/>
    <property type="evidence" value="ECO:0000318"/>
    <property type="project" value="GO_Central"/>
</dbReference>
<dbReference type="InterPro" id="IPR025929">
    <property type="entry name" value="INSIG_fam"/>
</dbReference>
<dbReference type="PANTHER" id="PTHR15301">
    <property type="entry name" value="INSULIN-INDUCED GENE 1"/>
    <property type="match status" value="1"/>
</dbReference>
<dbReference type="PANTHER" id="PTHR15301:SF11">
    <property type="entry name" value="INSULIN-INDUCED GENE 1 PROTEIN"/>
    <property type="match status" value="1"/>
</dbReference>
<dbReference type="Pfam" id="PF07281">
    <property type="entry name" value="INSIG"/>
    <property type="match status" value="1"/>
</dbReference>
<reference key="1">
    <citation type="submission" date="2004-07" db="EMBL/GenBank/DDBJ databases">
        <authorList>
            <consortium name="NIH - Xenopus Gene Collection (XGC) project"/>
        </authorList>
    </citation>
    <scope>NUCLEOTIDE SEQUENCE [LARGE SCALE MRNA]</scope>
    <source>
        <tissue>Oocyte</tissue>
    </source>
</reference>
<accession>Q6DF80</accession>
<sequence>MQTLEEHCWSCSCTRGRDKKGTKVSAWLARRVGKAMSSLNSLLSLAYSTLASSEGRSLIQRSLVLFTVGVFLALVLNLLQIQRNVTLFPEEVIATIFSSAWWVPPCCGTAAAVVGLLYPCIDSRIGEPHKFKREWASVMRCIAVFVGINHASAKLDFANNVQLSLTLAALSLGLWWTFDRSRSGLGLGITIAFLATLITQFLVYNGVYQYTSPDFLYIRSWLPCIFFSGGVTVGNIGRQLAMGSSEKTHGD</sequence>
<comment type="function">
    <text evidence="2">Oxysterol-binding protein that mediates feedback control of cholesterol synthesis by controlling both endoplasmic reticulum to Golgi transport of scap and degradation of hmgcr. Acts as a negative regulator of cholesterol biosynthesis by mediating the retention of the SCAP-SREBP complex in the endoplasmic reticulum, thereby blocking the processing of sterol regulatory element-binding proteins (SREBPs). Binds oxysterol, including 25-hydroxycholesterol, regulating interaction with scap and retention of the SCAP-SREBP complex in the endoplasmic reticulum. In presence of oxysterol, interacts with scap, retaining the SCAP-SREBP complex in the endoplasmic reticulum, thereby preventing scap from escorting SREBPs to the Golgi. Sterol deprivation reduces oxysterol-binding, disrupting the interaction between insig1 and scap, thereby promoting Golgi transport of the SCAP-SREBP complex, followed by processing and nuclear translocation of SREBPs. Also regulates cholesterol synthesis by regulating degradation of hmgcr.</text>
</comment>
<comment type="subunit">
    <text evidence="2">Interacts with scap; interaction is direct and only takes place in the presence of sterols; it prevents interaction between scap and the coat protein complex II (COPII). Associates with the SCAP-SREBP complex; association is mediated via its interaction with scap and only takes place in the presence of sterols.</text>
</comment>
<comment type="subcellular location">
    <subcellularLocation>
        <location evidence="2">Endoplasmic reticulum membrane</location>
        <topology evidence="2">Multi-pass membrane protein</topology>
    </subcellularLocation>
</comment>
<comment type="domain">
    <text evidence="2">The KxHxx motif mediates association with the coatomer complex.</text>
</comment>
<comment type="domain">
    <text evidence="3">Binds oxysterols in a pocket within their transmembrane domains and interacts with SCAP via transmembrane domains 3 and 4.</text>
</comment>
<comment type="similarity">
    <text evidence="4">Belongs to the INSIG family.</text>
</comment>
<evidence type="ECO:0000250" key="1">
    <source>
        <dbReference type="UniProtKB" id="A1T557"/>
    </source>
</evidence>
<evidence type="ECO:0000250" key="2">
    <source>
        <dbReference type="UniProtKB" id="O15503"/>
    </source>
</evidence>
<evidence type="ECO:0000250" key="3">
    <source>
        <dbReference type="UniProtKB" id="Q9Y5U4"/>
    </source>
</evidence>
<evidence type="ECO:0000305" key="4"/>
<protein>
    <recommendedName>
        <fullName evidence="2">Insulin-induced gene 1 protein</fullName>
        <shortName evidence="2">INSIG-1</shortName>
    </recommendedName>
</protein>
<organism>
    <name type="scientific">Xenopus laevis</name>
    <name type="common">African clawed frog</name>
    <dbReference type="NCBI Taxonomy" id="8355"/>
    <lineage>
        <taxon>Eukaryota</taxon>
        <taxon>Metazoa</taxon>
        <taxon>Chordata</taxon>
        <taxon>Craniata</taxon>
        <taxon>Vertebrata</taxon>
        <taxon>Euteleostomi</taxon>
        <taxon>Amphibia</taxon>
        <taxon>Batrachia</taxon>
        <taxon>Anura</taxon>
        <taxon>Pipoidea</taxon>
        <taxon>Pipidae</taxon>
        <taxon>Xenopodinae</taxon>
        <taxon>Xenopus</taxon>
        <taxon>Xenopus</taxon>
    </lineage>
</organism>
<name>INSI1_XENLA</name>